<protein>
    <recommendedName>
        <fullName evidence="1">DNA-directed RNA polymerase subunit beta</fullName>
        <ecNumber evidence="1">2.7.7.6</ecNumber>
    </recommendedName>
    <alternativeName>
        <fullName evidence="1">PEP</fullName>
    </alternativeName>
    <alternativeName>
        <fullName evidence="1">Plastid-encoded RNA polymerase subunit beta</fullName>
        <shortName evidence="1">RNA polymerase subunit beta</shortName>
    </alternativeName>
</protein>
<keyword id="KW-0150">Chloroplast</keyword>
<keyword id="KW-0240">DNA-directed RNA polymerase</keyword>
<keyword id="KW-0548">Nucleotidyltransferase</keyword>
<keyword id="KW-0934">Plastid</keyword>
<keyword id="KW-0804">Transcription</keyword>
<keyword id="KW-0808">Transferase</keyword>
<name>RPOB_HETAK</name>
<feature type="chain" id="PRO_0000048025" description="DNA-directed RNA polymerase subunit beta">
    <location>
        <begin position="1"/>
        <end position="1116"/>
    </location>
</feature>
<feature type="region of interest" description="Disordered" evidence="2">
    <location>
        <begin position="1070"/>
        <end position="1116"/>
    </location>
</feature>
<feature type="compositionally biased region" description="Basic and acidic residues" evidence="2">
    <location>
        <begin position="1070"/>
        <end position="1100"/>
    </location>
</feature>
<feature type="compositionally biased region" description="Basic residues" evidence="2">
    <location>
        <begin position="1101"/>
        <end position="1116"/>
    </location>
</feature>
<comment type="function">
    <text evidence="1">DNA-dependent RNA polymerase catalyzes the transcription of DNA into RNA using the four ribonucleoside triphosphates as substrates.</text>
</comment>
<comment type="catalytic activity">
    <reaction evidence="1">
        <text>RNA(n) + a ribonucleoside 5'-triphosphate = RNA(n+1) + diphosphate</text>
        <dbReference type="Rhea" id="RHEA:21248"/>
        <dbReference type="Rhea" id="RHEA-COMP:14527"/>
        <dbReference type="Rhea" id="RHEA-COMP:17342"/>
        <dbReference type="ChEBI" id="CHEBI:33019"/>
        <dbReference type="ChEBI" id="CHEBI:61557"/>
        <dbReference type="ChEBI" id="CHEBI:140395"/>
        <dbReference type="EC" id="2.7.7.6"/>
    </reaction>
</comment>
<comment type="subunit">
    <text evidence="1">In plastids the minimal PEP RNA polymerase catalytic core is composed of four subunits: alpha, beta, beta', and beta''. When a (nuclear-encoded) sigma factor is associated with the core the holoenzyme is formed, which can initiate transcription.</text>
</comment>
<comment type="subcellular location">
    <subcellularLocation>
        <location>Plastid</location>
        <location>Chloroplast</location>
    </subcellularLocation>
</comment>
<comment type="similarity">
    <text evidence="1">Belongs to the RNA polymerase beta chain family.</text>
</comment>
<evidence type="ECO:0000255" key="1">
    <source>
        <dbReference type="HAMAP-Rule" id="MF_01321"/>
    </source>
</evidence>
<evidence type="ECO:0000256" key="2">
    <source>
        <dbReference type="SAM" id="MobiDB-lite"/>
    </source>
</evidence>
<sequence length="1116" mass="125819">MVNNTFITKLPDFLEIQRSSFCWFLLKGLSYELNSLSPIIDVNVKRVKLKLYPQEFVLKPGRTTPICAKQNDSTYGVRIFLPAEVIYCDTESKYPTKKNRLEDIKEKVFIGQIPLMTSTGSFIVNGCEGYRNQIIRCPGLYYKAEFLNNNIVSTVTIIAQRGSWLKFEFDKNGYWVRIDKEKKISIFDFLEGLNINDEEILSGLKSIAPLLKYKKTQEILKRNNDPDLKNLIEKITDPNSYSLGIIGRLNLNRRLGLNISTRVHTLTIHDIFGIIDFFLSARSFVPDDIDDLRNRRIRAVGELITSQCEIGLNRLERNILERTNFSGSVRILPKTLVNARPIMSAIQEFFNSSQLSHYMDQTNLLSETANKRRISALGPGGLNADRVTVAARDIHPTQYGRLCPIETPEGQNVGLVSTLASYARINRNGFIQTPYFRVENGKILTQQPLIYLTAEQENLKIAPADVKRDQDGYLVDDFIVTRFQSKNFIITPSKLVDFISVSEIQIISVAASLIPFLEHDDANRALMGANMQRQAVPLLYPRKPIVGTGIESQVAFDSRLVNIATKPGIVKYVSSQQIDIKNIEGEKIAYKLIKYRPSNQDTCLNQRPLVWVGQSIKTGQVIADGPGTQSGELALGQNLTVAYMPWQGYNYEDAILVSDKLDIQNLFTSIHIEECETEVQQTKTGEQVITSDIPLVSEKNCKNLDENGIIKVGKYVYPGDILVGKITPKGEIDQLPEAKLLKAIFGFKTPDMRDSSLRVPGGLSGRVLDIKIFKKPKPGKVFGVGSKIRVFIAQISKLQVGDKIAGRHGNKGVISRILPHQDMPFLPDGTSVDIILNPLGVPSRMNVGQIFECLLGLAGDQLNKRFKILPFDEMYQNEASRILINQKLKDAAKKQNKPWLFSAYSPGKILLSDGRTGEKFDNPVLVGRSYILKLAHLVEDKIHARSTGPYSLITQQPVGGKSQNGGQRFGEMEVWALEAFGAAYTLQELLTIKSDDMQGRDDVLNSIVCGQEIPKSSIPESFKVLMRELNALGLDITTYKVMFENETNKNCLIKNEINLMQTYEEGIKAKIREEEKEREKEREAREMEDPEKIVSKIDAKQKKKYKKTKKQTEKKK</sequence>
<geneLocation type="chloroplast"/>
<organism>
    <name type="scientific">Heterosigma akashiwo</name>
    <name type="common">Chromophytic alga</name>
    <name type="synonym">Heterosigma carterae</name>
    <dbReference type="NCBI Taxonomy" id="2829"/>
    <lineage>
        <taxon>Eukaryota</taxon>
        <taxon>Sar</taxon>
        <taxon>Stramenopiles</taxon>
        <taxon>Ochrophyta</taxon>
        <taxon>Raphidophyceae</taxon>
        <taxon>Chattonellales</taxon>
        <taxon>Chattonellaceae</taxon>
        <taxon>Heterosigma</taxon>
    </lineage>
</organism>
<proteinExistence type="inferred from homology"/>
<gene>
    <name evidence="1" type="primary">rpoB</name>
</gene>
<reference key="1">
    <citation type="submission" date="1993-11" db="EMBL/GenBank/DDBJ databases">
        <authorList>
            <person name="Mangahas J.L."/>
            <person name="Cattolico R.A."/>
            <person name="Reynolds A.E."/>
        </authorList>
    </citation>
    <scope>NUCLEOTIDE SEQUENCE [GENOMIC DNA]</scope>
</reference>
<accession>P36440</accession>
<dbReference type="EC" id="2.7.7.6" evidence="1"/>
<dbReference type="EMBL" id="X75815">
    <property type="protein sequence ID" value="CAA53450.1"/>
    <property type="molecule type" value="Genomic_DNA"/>
</dbReference>
<dbReference type="PIR" id="S41915">
    <property type="entry name" value="S41915"/>
</dbReference>
<dbReference type="SMR" id="P36440"/>
<dbReference type="GO" id="GO:0009507">
    <property type="term" value="C:chloroplast"/>
    <property type="evidence" value="ECO:0007669"/>
    <property type="project" value="UniProtKB-SubCell"/>
</dbReference>
<dbReference type="GO" id="GO:0000428">
    <property type="term" value="C:DNA-directed RNA polymerase complex"/>
    <property type="evidence" value="ECO:0007669"/>
    <property type="project" value="UniProtKB-KW"/>
</dbReference>
<dbReference type="GO" id="GO:0005739">
    <property type="term" value="C:mitochondrion"/>
    <property type="evidence" value="ECO:0007669"/>
    <property type="project" value="GOC"/>
</dbReference>
<dbReference type="GO" id="GO:0003677">
    <property type="term" value="F:DNA binding"/>
    <property type="evidence" value="ECO:0007669"/>
    <property type="project" value="UniProtKB-UniRule"/>
</dbReference>
<dbReference type="GO" id="GO:0003899">
    <property type="term" value="F:DNA-directed RNA polymerase activity"/>
    <property type="evidence" value="ECO:0007669"/>
    <property type="project" value="UniProtKB-UniRule"/>
</dbReference>
<dbReference type="GO" id="GO:0032549">
    <property type="term" value="F:ribonucleoside binding"/>
    <property type="evidence" value="ECO:0007669"/>
    <property type="project" value="InterPro"/>
</dbReference>
<dbReference type="GO" id="GO:0006351">
    <property type="term" value="P:DNA-templated transcription"/>
    <property type="evidence" value="ECO:0007669"/>
    <property type="project" value="UniProtKB-UniRule"/>
</dbReference>
<dbReference type="CDD" id="cd00653">
    <property type="entry name" value="RNA_pol_B_RPB2"/>
    <property type="match status" value="1"/>
</dbReference>
<dbReference type="Gene3D" id="2.40.50.100">
    <property type="match status" value="1"/>
</dbReference>
<dbReference type="Gene3D" id="2.40.50.150">
    <property type="match status" value="1"/>
</dbReference>
<dbReference type="Gene3D" id="3.90.1100.10">
    <property type="match status" value="1"/>
</dbReference>
<dbReference type="Gene3D" id="2.30.150.10">
    <property type="entry name" value="DNA-directed RNA polymerase, beta subunit, external 1 domain"/>
    <property type="match status" value="1"/>
</dbReference>
<dbReference type="Gene3D" id="2.40.270.10">
    <property type="entry name" value="DNA-directed RNA polymerase, subunit 2, domain 6"/>
    <property type="match status" value="1"/>
</dbReference>
<dbReference type="Gene3D" id="3.90.1800.10">
    <property type="entry name" value="RNA polymerase alpha subunit dimerisation domain"/>
    <property type="match status" value="1"/>
</dbReference>
<dbReference type="Gene3D" id="3.90.1110.10">
    <property type="entry name" value="RNA polymerase Rpb2, domain 2"/>
    <property type="match status" value="1"/>
</dbReference>
<dbReference type="HAMAP" id="MF_01321">
    <property type="entry name" value="RNApol_bact_RpoB"/>
    <property type="match status" value="1"/>
</dbReference>
<dbReference type="InterPro" id="IPR042107">
    <property type="entry name" value="DNA-dir_RNA_pol_bsu_ext_1_sf"/>
</dbReference>
<dbReference type="InterPro" id="IPR019462">
    <property type="entry name" value="DNA-dir_RNA_pol_bsu_external_1"/>
</dbReference>
<dbReference type="InterPro" id="IPR015712">
    <property type="entry name" value="DNA-dir_RNA_pol_su2"/>
</dbReference>
<dbReference type="InterPro" id="IPR007120">
    <property type="entry name" value="DNA-dir_RNAP_su2_dom"/>
</dbReference>
<dbReference type="InterPro" id="IPR037033">
    <property type="entry name" value="DNA-dir_RNAP_su2_hyb_sf"/>
</dbReference>
<dbReference type="InterPro" id="IPR010243">
    <property type="entry name" value="RNA_pol_bsu_bac"/>
</dbReference>
<dbReference type="InterPro" id="IPR007121">
    <property type="entry name" value="RNA_pol_bsu_CS"/>
</dbReference>
<dbReference type="InterPro" id="IPR007642">
    <property type="entry name" value="RNA_pol_Rpb2_2"/>
</dbReference>
<dbReference type="InterPro" id="IPR037034">
    <property type="entry name" value="RNA_pol_Rpb2_2_sf"/>
</dbReference>
<dbReference type="InterPro" id="IPR007645">
    <property type="entry name" value="RNA_pol_Rpb2_3"/>
</dbReference>
<dbReference type="InterPro" id="IPR007641">
    <property type="entry name" value="RNA_pol_Rpb2_7"/>
</dbReference>
<dbReference type="InterPro" id="IPR014724">
    <property type="entry name" value="RNA_pol_RPB2_OB-fold"/>
</dbReference>
<dbReference type="NCBIfam" id="NF001616">
    <property type="entry name" value="PRK00405.1"/>
    <property type="match status" value="1"/>
</dbReference>
<dbReference type="PANTHER" id="PTHR20856">
    <property type="entry name" value="DNA-DIRECTED RNA POLYMERASE I SUBUNIT 2"/>
    <property type="match status" value="1"/>
</dbReference>
<dbReference type="Pfam" id="PF04561">
    <property type="entry name" value="RNA_pol_Rpb2_2"/>
    <property type="match status" value="1"/>
</dbReference>
<dbReference type="Pfam" id="PF04565">
    <property type="entry name" value="RNA_pol_Rpb2_3"/>
    <property type="match status" value="1"/>
</dbReference>
<dbReference type="Pfam" id="PF10385">
    <property type="entry name" value="RNA_pol_Rpb2_45"/>
    <property type="match status" value="1"/>
</dbReference>
<dbReference type="Pfam" id="PF00562">
    <property type="entry name" value="RNA_pol_Rpb2_6"/>
    <property type="match status" value="1"/>
</dbReference>
<dbReference type="Pfam" id="PF04560">
    <property type="entry name" value="RNA_pol_Rpb2_7"/>
    <property type="match status" value="1"/>
</dbReference>
<dbReference type="SUPFAM" id="SSF64484">
    <property type="entry name" value="beta and beta-prime subunits of DNA dependent RNA-polymerase"/>
    <property type="match status" value="1"/>
</dbReference>
<dbReference type="PROSITE" id="PS01166">
    <property type="entry name" value="RNA_POL_BETA"/>
    <property type="match status" value="1"/>
</dbReference>